<dbReference type="EC" id="3.1.13.1" evidence="2"/>
<dbReference type="EMBL" id="BX950851">
    <property type="protein sequence ID" value="CAG74865.1"/>
    <property type="molecule type" value="Genomic_DNA"/>
</dbReference>
<dbReference type="RefSeq" id="WP_011093527.1">
    <property type="nucleotide sequence ID" value="NC_004547.2"/>
</dbReference>
<dbReference type="SMR" id="Q6D5S7"/>
<dbReference type="STRING" id="218491.ECA1963"/>
<dbReference type="KEGG" id="eca:ECA1963"/>
<dbReference type="PATRIC" id="fig|218491.5.peg.1999"/>
<dbReference type="eggNOG" id="COG4776">
    <property type="taxonomic scope" value="Bacteria"/>
</dbReference>
<dbReference type="HOGENOM" id="CLU_002333_7_3_6"/>
<dbReference type="OrthoDB" id="9764149at2"/>
<dbReference type="Proteomes" id="UP000007966">
    <property type="component" value="Chromosome"/>
</dbReference>
<dbReference type="GO" id="GO:0005829">
    <property type="term" value="C:cytosol"/>
    <property type="evidence" value="ECO:0007669"/>
    <property type="project" value="TreeGrafter"/>
</dbReference>
<dbReference type="GO" id="GO:0008859">
    <property type="term" value="F:exoribonuclease II activity"/>
    <property type="evidence" value="ECO:0007669"/>
    <property type="project" value="UniProtKB-UniRule"/>
</dbReference>
<dbReference type="GO" id="GO:0003723">
    <property type="term" value="F:RNA binding"/>
    <property type="evidence" value="ECO:0007669"/>
    <property type="project" value="UniProtKB-KW"/>
</dbReference>
<dbReference type="GO" id="GO:0006402">
    <property type="term" value="P:mRNA catabolic process"/>
    <property type="evidence" value="ECO:0007669"/>
    <property type="project" value="UniProtKB-UniRule"/>
</dbReference>
<dbReference type="FunFam" id="2.40.50.140:FF:000079">
    <property type="entry name" value="Exoribonuclease 2"/>
    <property type="match status" value="1"/>
</dbReference>
<dbReference type="Gene3D" id="2.40.50.640">
    <property type="match status" value="1"/>
</dbReference>
<dbReference type="Gene3D" id="2.40.50.140">
    <property type="entry name" value="Nucleic acid-binding proteins"/>
    <property type="match status" value="2"/>
</dbReference>
<dbReference type="HAMAP" id="MF_01036">
    <property type="entry name" value="RNase_II"/>
    <property type="match status" value="1"/>
</dbReference>
<dbReference type="InterPro" id="IPR011129">
    <property type="entry name" value="CSD"/>
</dbReference>
<dbReference type="InterPro" id="IPR012340">
    <property type="entry name" value="NA-bd_OB-fold"/>
</dbReference>
<dbReference type="InterPro" id="IPR013223">
    <property type="entry name" value="RNase_B_OB_dom"/>
</dbReference>
<dbReference type="InterPro" id="IPR011804">
    <property type="entry name" value="RNase_II"/>
</dbReference>
<dbReference type="InterPro" id="IPR001900">
    <property type="entry name" value="RNase_II/R"/>
</dbReference>
<dbReference type="InterPro" id="IPR022966">
    <property type="entry name" value="RNase_II/R_CS"/>
</dbReference>
<dbReference type="InterPro" id="IPR004476">
    <property type="entry name" value="RNase_II/RNase_R"/>
</dbReference>
<dbReference type="InterPro" id="IPR050180">
    <property type="entry name" value="RNR_Ribonuclease"/>
</dbReference>
<dbReference type="InterPro" id="IPR003029">
    <property type="entry name" value="S1_domain"/>
</dbReference>
<dbReference type="NCBIfam" id="TIGR00358">
    <property type="entry name" value="3_prime_RNase"/>
    <property type="match status" value="1"/>
</dbReference>
<dbReference type="NCBIfam" id="NF003455">
    <property type="entry name" value="PRK05054.1"/>
    <property type="match status" value="1"/>
</dbReference>
<dbReference type="NCBIfam" id="TIGR02062">
    <property type="entry name" value="RNase_B"/>
    <property type="match status" value="1"/>
</dbReference>
<dbReference type="PANTHER" id="PTHR23355:SF37">
    <property type="entry name" value="EXORIBONUCLEASE 2"/>
    <property type="match status" value="1"/>
</dbReference>
<dbReference type="PANTHER" id="PTHR23355">
    <property type="entry name" value="RIBONUCLEASE"/>
    <property type="match status" value="1"/>
</dbReference>
<dbReference type="Pfam" id="PF08206">
    <property type="entry name" value="OB_RNB"/>
    <property type="match status" value="1"/>
</dbReference>
<dbReference type="Pfam" id="PF00773">
    <property type="entry name" value="RNB"/>
    <property type="match status" value="1"/>
</dbReference>
<dbReference type="Pfam" id="PF00575">
    <property type="entry name" value="S1"/>
    <property type="match status" value="1"/>
</dbReference>
<dbReference type="SMART" id="SM00357">
    <property type="entry name" value="CSP"/>
    <property type="match status" value="1"/>
</dbReference>
<dbReference type="SMART" id="SM00955">
    <property type="entry name" value="RNB"/>
    <property type="match status" value="1"/>
</dbReference>
<dbReference type="SUPFAM" id="SSF50249">
    <property type="entry name" value="Nucleic acid-binding proteins"/>
    <property type="match status" value="4"/>
</dbReference>
<dbReference type="PROSITE" id="PS01175">
    <property type="entry name" value="RIBONUCLEASE_II"/>
    <property type="match status" value="1"/>
</dbReference>
<comment type="function">
    <text evidence="2">Involved in mRNA degradation. Hydrolyzes single-stranded polyribonucleotides processively in the 3' to 5' direction.</text>
</comment>
<comment type="catalytic activity">
    <reaction evidence="2">
        <text>Exonucleolytic cleavage in the 3'- to 5'-direction to yield nucleoside 5'-phosphates.</text>
        <dbReference type="EC" id="3.1.13.1"/>
    </reaction>
</comment>
<comment type="subcellular location">
    <subcellularLocation>
        <location evidence="2">Cytoplasm</location>
    </subcellularLocation>
</comment>
<comment type="similarity">
    <text evidence="2">Belongs to the RNR ribonuclease family. RNase II subfamily.</text>
</comment>
<accession>Q6D5S7</accession>
<organism>
    <name type="scientific">Pectobacterium atrosepticum (strain SCRI 1043 / ATCC BAA-672)</name>
    <name type="common">Erwinia carotovora subsp. atroseptica</name>
    <dbReference type="NCBI Taxonomy" id="218491"/>
    <lineage>
        <taxon>Bacteria</taxon>
        <taxon>Pseudomonadati</taxon>
        <taxon>Pseudomonadota</taxon>
        <taxon>Gammaproteobacteria</taxon>
        <taxon>Enterobacterales</taxon>
        <taxon>Pectobacteriaceae</taxon>
        <taxon>Pectobacterium</taxon>
    </lineage>
</organism>
<protein>
    <recommendedName>
        <fullName evidence="2">Exoribonuclease 2</fullName>
        <ecNumber evidence="2">3.1.13.1</ecNumber>
    </recommendedName>
    <alternativeName>
        <fullName evidence="2">Exoribonuclease II</fullName>
        <shortName evidence="2">RNase II</shortName>
        <shortName evidence="2">Ribonuclease II</shortName>
    </alternativeName>
</protein>
<evidence type="ECO:0000255" key="1"/>
<evidence type="ECO:0000255" key="2">
    <source>
        <dbReference type="HAMAP-Rule" id="MF_01036"/>
    </source>
</evidence>
<gene>
    <name evidence="2" type="primary">rnb</name>
    <name type="ordered locus">ECA1963</name>
</gene>
<proteinExistence type="inferred from homology"/>
<keyword id="KW-0963">Cytoplasm</keyword>
<keyword id="KW-0269">Exonuclease</keyword>
<keyword id="KW-0378">Hydrolase</keyword>
<keyword id="KW-0540">Nuclease</keyword>
<keyword id="KW-1185">Reference proteome</keyword>
<keyword id="KW-0694">RNA-binding</keyword>
<name>RNB_PECAS</name>
<reference key="1">
    <citation type="journal article" date="2004" name="Proc. Natl. Acad. Sci. U.S.A.">
        <title>Genome sequence of the enterobacterial phytopathogen Erwinia carotovora subsp. atroseptica and characterization of virulence factors.</title>
        <authorList>
            <person name="Bell K.S."/>
            <person name="Sebaihia M."/>
            <person name="Pritchard L."/>
            <person name="Holden M.T.G."/>
            <person name="Hyman L.J."/>
            <person name="Holeva M.C."/>
            <person name="Thomson N.R."/>
            <person name="Bentley S.D."/>
            <person name="Churcher L.J.C."/>
            <person name="Mungall K."/>
            <person name="Atkin R."/>
            <person name="Bason N."/>
            <person name="Brooks K."/>
            <person name="Chillingworth T."/>
            <person name="Clark K."/>
            <person name="Doggett J."/>
            <person name="Fraser A."/>
            <person name="Hance Z."/>
            <person name="Hauser H."/>
            <person name="Jagels K."/>
            <person name="Moule S."/>
            <person name="Norbertczak H."/>
            <person name="Ormond D."/>
            <person name="Price C."/>
            <person name="Quail M.A."/>
            <person name="Sanders M."/>
            <person name="Walker D."/>
            <person name="Whitehead S."/>
            <person name="Salmond G.P.C."/>
            <person name="Birch P.R.J."/>
            <person name="Parkhill J."/>
            <person name="Toth I.K."/>
        </authorList>
    </citation>
    <scope>NUCLEOTIDE SEQUENCE [LARGE SCALE GENOMIC DNA]</scope>
    <source>
        <strain>SCRI 1043 / ATCC BAA-672</strain>
    </source>
</reference>
<feature type="chain" id="PRO_1000063890" description="Exoribonuclease 2">
    <location>
        <begin position="1"/>
        <end position="644"/>
    </location>
</feature>
<feature type="domain" description="RNB" evidence="1">
    <location>
        <begin position="189"/>
        <end position="516"/>
    </location>
</feature>
<feature type="domain" description="S1 motif" evidence="2">
    <location>
        <begin position="561"/>
        <end position="643"/>
    </location>
</feature>
<sequence length="644" mass="72399">MFQDNPLLAQLKQQLHSKTPRVEGVVKGTDKGFGFLEADGQKSYFIPPPHMKKVMHGDRITATLHTEKDREIVEPETLIEPFLTRFVGRIHKKDDRLSITPDHPLLKEAIPCRAARDVTDDFQEGDWAVAEMRRHPLKGDRGFHAELTQYITTGDDPLVPWWVTLSRHNLERSAPEVETTERHDGELVREDLTALNFVTIDSASTEDMDDALYVQDNGDGSLQLTIAIADPTAYVDAGSELDNIARQRAFTNYLPGFNIPMLPRALSDDICSLRPNERRPVLACRVTIAADGALGDDIHFFAASIESKAKLAYDNVSDWLENQGEWQPQNEEIAEQIRLLHRLCLARSEWRTTHALVFKDRPDYRFLLGEKGEVLDIVVEHRRIANRIVEESMIAANVCAAIVLRDKLGFGIYNVHNGFDPASIEQAVAVLDTHGVQADAQTLLTLDGFCTLRRELDAQPTQFLDSRIRRFQSFAEVSTTPGPHFGLGLEAYATWTSPIRKYGDMVNHRLLKAVITGQAAEKPQDDVTVQLAERRRLNRMAERDVGDWLYARYLKDKAGTDIRFNAEIIDVTRGGLRVRLLDNGAVVFIPSSFIHAVRDELVCSQEMGTLSVKGEVVYRQGDTLDVIIAEVRLETRGIVAKPAA</sequence>